<feature type="chain" id="PRO_1000000976" description="Dihydroxy-acid dehydratase">
    <location>
        <begin position="1"/>
        <end position="554"/>
    </location>
</feature>
<feature type="active site" description="Proton acceptor" evidence="1">
    <location>
        <position position="469"/>
    </location>
</feature>
<feature type="binding site" evidence="1">
    <location>
        <position position="78"/>
    </location>
    <ligand>
        <name>Mg(2+)</name>
        <dbReference type="ChEBI" id="CHEBI:18420"/>
    </ligand>
</feature>
<feature type="binding site" evidence="1">
    <location>
        <position position="119"/>
    </location>
    <ligand>
        <name>[2Fe-2S] cluster</name>
        <dbReference type="ChEBI" id="CHEBI:190135"/>
    </ligand>
</feature>
<feature type="binding site" evidence="1">
    <location>
        <position position="120"/>
    </location>
    <ligand>
        <name>Mg(2+)</name>
        <dbReference type="ChEBI" id="CHEBI:18420"/>
    </ligand>
</feature>
<feature type="binding site" description="via carbamate group" evidence="1">
    <location>
        <position position="121"/>
    </location>
    <ligand>
        <name>Mg(2+)</name>
        <dbReference type="ChEBI" id="CHEBI:18420"/>
    </ligand>
</feature>
<feature type="binding site" evidence="1">
    <location>
        <position position="192"/>
    </location>
    <ligand>
        <name>[2Fe-2S] cluster</name>
        <dbReference type="ChEBI" id="CHEBI:190135"/>
    </ligand>
</feature>
<feature type="binding site" evidence="1">
    <location>
        <position position="443"/>
    </location>
    <ligand>
        <name>Mg(2+)</name>
        <dbReference type="ChEBI" id="CHEBI:18420"/>
    </ligand>
</feature>
<feature type="modified residue" description="N6-carboxylysine" evidence="1">
    <location>
        <position position="121"/>
    </location>
</feature>
<gene>
    <name evidence="1" type="primary">ilvD</name>
    <name type="ordered locus">NT01CX_2027</name>
</gene>
<evidence type="ECO:0000255" key="1">
    <source>
        <dbReference type="HAMAP-Rule" id="MF_00012"/>
    </source>
</evidence>
<proteinExistence type="inferred from homology"/>
<organism>
    <name type="scientific">Clostridium novyi (strain NT)</name>
    <dbReference type="NCBI Taxonomy" id="386415"/>
    <lineage>
        <taxon>Bacteria</taxon>
        <taxon>Bacillati</taxon>
        <taxon>Bacillota</taxon>
        <taxon>Clostridia</taxon>
        <taxon>Eubacteriales</taxon>
        <taxon>Clostridiaceae</taxon>
        <taxon>Clostridium</taxon>
    </lineage>
</organism>
<accession>A0Q0E8</accession>
<reference key="1">
    <citation type="journal article" date="2006" name="Nat. Biotechnol.">
        <title>The genome and transcriptomes of the anti-tumor agent Clostridium novyi-NT.</title>
        <authorList>
            <person name="Bettegowda C."/>
            <person name="Huang X."/>
            <person name="Lin J."/>
            <person name="Cheong I."/>
            <person name="Kohli M."/>
            <person name="Szabo S.A."/>
            <person name="Zhang X."/>
            <person name="Diaz L.A. Jr."/>
            <person name="Velculescu V.E."/>
            <person name="Parmigiani G."/>
            <person name="Kinzler K.W."/>
            <person name="Vogelstein B."/>
            <person name="Zhou S."/>
        </authorList>
    </citation>
    <scope>NUCLEOTIDE SEQUENCE [LARGE SCALE GENOMIC DNA]</scope>
    <source>
        <strain>NT</strain>
    </source>
</reference>
<name>ILVD_CLONN</name>
<protein>
    <recommendedName>
        <fullName evidence="1">Dihydroxy-acid dehydratase</fullName>
        <shortName evidence="1">DAD</shortName>
        <ecNumber evidence="1">4.2.1.9</ecNumber>
    </recommendedName>
</protein>
<comment type="function">
    <text evidence="1">Functions in the biosynthesis of branched-chain amino acids. Catalyzes the dehydration of (2R,3R)-2,3-dihydroxy-3-methylpentanoate (2,3-dihydroxy-3-methylvalerate) into 2-oxo-3-methylpentanoate (2-oxo-3-methylvalerate) and of (2R)-2,3-dihydroxy-3-methylbutanoate (2,3-dihydroxyisovalerate) into 2-oxo-3-methylbutanoate (2-oxoisovalerate), the penultimate precursor to L-isoleucine and L-valine, respectively.</text>
</comment>
<comment type="catalytic activity">
    <reaction evidence="1">
        <text>(2R)-2,3-dihydroxy-3-methylbutanoate = 3-methyl-2-oxobutanoate + H2O</text>
        <dbReference type="Rhea" id="RHEA:24809"/>
        <dbReference type="ChEBI" id="CHEBI:11851"/>
        <dbReference type="ChEBI" id="CHEBI:15377"/>
        <dbReference type="ChEBI" id="CHEBI:49072"/>
        <dbReference type="EC" id="4.2.1.9"/>
    </reaction>
    <physiologicalReaction direction="left-to-right" evidence="1">
        <dbReference type="Rhea" id="RHEA:24810"/>
    </physiologicalReaction>
</comment>
<comment type="catalytic activity">
    <reaction evidence="1">
        <text>(2R,3R)-2,3-dihydroxy-3-methylpentanoate = (S)-3-methyl-2-oxopentanoate + H2O</text>
        <dbReference type="Rhea" id="RHEA:27694"/>
        <dbReference type="ChEBI" id="CHEBI:15377"/>
        <dbReference type="ChEBI" id="CHEBI:35146"/>
        <dbReference type="ChEBI" id="CHEBI:49258"/>
        <dbReference type="EC" id="4.2.1.9"/>
    </reaction>
    <physiologicalReaction direction="left-to-right" evidence="1">
        <dbReference type="Rhea" id="RHEA:27695"/>
    </physiologicalReaction>
</comment>
<comment type="cofactor">
    <cofactor evidence="1">
        <name>[2Fe-2S] cluster</name>
        <dbReference type="ChEBI" id="CHEBI:190135"/>
    </cofactor>
    <text evidence="1">Binds 1 [2Fe-2S] cluster per subunit. This cluster acts as a Lewis acid cofactor.</text>
</comment>
<comment type="cofactor">
    <cofactor evidence="1">
        <name>Mg(2+)</name>
        <dbReference type="ChEBI" id="CHEBI:18420"/>
    </cofactor>
</comment>
<comment type="pathway">
    <text evidence="1">Amino-acid biosynthesis; L-isoleucine biosynthesis; L-isoleucine from 2-oxobutanoate: step 3/4.</text>
</comment>
<comment type="pathway">
    <text evidence="1">Amino-acid biosynthesis; L-valine biosynthesis; L-valine from pyruvate: step 3/4.</text>
</comment>
<comment type="subunit">
    <text evidence="1">Homodimer.</text>
</comment>
<comment type="similarity">
    <text evidence="1">Belongs to the IlvD/Edd family.</text>
</comment>
<sequence>MNSKEVTKGVARAPHRSLFYAMGYTPEDLKKPLIGIVNSHNEIIPGHFHLNEIVQAVKLGVASAGGTPIEIPSIGICDGISMNHSGMKYPLASRELIADSIEAMTIAHKFDALVLVGNCDKIVPGMLMGAARLNVPAIYVSGGPMLPGKLKGKKIDLVHGAFEAVGSYAEGILSDDDLNKIEQHSCPTCGSCAGLFTANSMNSLAEALGVALPGNGTIPAPYGRRKQLAKYAGVKIMELVKKKIKLRDILTKEAFKNAIALDMAIGGSSNTTLHLMAIAHEAKVYLTLEDFDEISRRIPHITKLSPAGTHHMVDLDEAGGISAVLKELMDANLIFKDQLTVTGKTLEENIKNSLVLNDSVIRPLNNPYSNEGGIAILRGNLAPDGAVVKQSAVEPEMLYHKGVARVFDGEELAFDAIMNKKIHPGDVVVIRYEGPKGCPGMREMLSPTAAIIGLGLEKSTALITDGRFSGGTRGPCIGHISPEASEGGPIALIEEGDLIEIDISNRRISLLVSPEELSKRKENWIQPPCKAPDGTYLKRYSKLVTSASTGAVLE</sequence>
<keyword id="KW-0001">2Fe-2S</keyword>
<keyword id="KW-0028">Amino-acid biosynthesis</keyword>
<keyword id="KW-0100">Branched-chain amino acid biosynthesis</keyword>
<keyword id="KW-0408">Iron</keyword>
<keyword id="KW-0411">Iron-sulfur</keyword>
<keyword id="KW-0456">Lyase</keyword>
<keyword id="KW-0460">Magnesium</keyword>
<keyword id="KW-0479">Metal-binding</keyword>
<keyword id="KW-1185">Reference proteome</keyword>
<dbReference type="EC" id="4.2.1.9" evidence="1"/>
<dbReference type="EMBL" id="CP000382">
    <property type="protein sequence ID" value="ABK60383.1"/>
    <property type="molecule type" value="Genomic_DNA"/>
</dbReference>
<dbReference type="RefSeq" id="WP_011722102.1">
    <property type="nucleotide sequence ID" value="NC_008593.1"/>
</dbReference>
<dbReference type="SMR" id="A0Q0E8"/>
<dbReference type="STRING" id="386415.NT01CX_2027"/>
<dbReference type="KEGG" id="cno:NT01CX_2027"/>
<dbReference type="PATRIC" id="fig|386415.7.peg.1131"/>
<dbReference type="eggNOG" id="COG0129">
    <property type="taxonomic scope" value="Bacteria"/>
</dbReference>
<dbReference type="HOGENOM" id="CLU_014271_4_2_9"/>
<dbReference type="UniPathway" id="UPA00047">
    <property type="reaction ID" value="UER00057"/>
</dbReference>
<dbReference type="UniPathway" id="UPA00049">
    <property type="reaction ID" value="UER00061"/>
</dbReference>
<dbReference type="Proteomes" id="UP000008220">
    <property type="component" value="Chromosome"/>
</dbReference>
<dbReference type="GO" id="GO:0005829">
    <property type="term" value="C:cytosol"/>
    <property type="evidence" value="ECO:0007669"/>
    <property type="project" value="TreeGrafter"/>
</dbReference>
<dbReference type="GO" id="GO:0051537">
    <property type="term" value="F:2 iron, 2 sulfur cluster binding"/>
    <property type="evidence" value="ECO:0007669"/>
    <property type="project" value="UniProtKB-UniRule"/>
</dbReference>
<dbReference type="GO" id="GO:0004160">
    <property type="term" value="F:dihydroxy-acid dehydratase activity"/>
    <property type="evidence" value="ECO:0007669"/>
    <property type="project" value="UniProtKB-UniRule"/>
</dbReference>
<dbReference type="GO" id="GO:0000287">
    <property type="term" value="F:magnesium ion binding"/>
    <property type="evidence" value="ECO:0007669"/>
    <property type="project" value="UniProtKB-UniRule"/>
</dbReference>
<dbReference type="GO" id="GO:0009097">
    <property type="term" value="P:isoleucine biosynthetic process"/>
    <property type="evidence" value="ECO:0007669"/>
    <property type="project" value="UniProtKB-UniRule"/>
</dbReference>
<dbReference type="GO" id="GO:0009099">
    <property type="term" value="P:L-valine biosynthetic process"/>
    <property type="evidence" value="ECO:0007669"/>
    <property type="project" value="UniProtKB-UniRule"/>
</dbReference>
<dbReference type="FunFam" id="3.50.30.80:FF:000001">
    <property type="entry name" value="Dihydroxy-acid dehydratase"/>
    <property type="match status" value="1"/>
</dbReference>
<dbReference type="Gene3D" id="3.50.30.80">
    <property type="entry name" value="IlvD/EDD C-terminal domain-like"/>
    <property type="match status" value="1"/>
</dbReference>
<dbReference type="HAMAP" id="MF_00012">
    <property type="entry name" value="IlvD"/>
    <property type="match status" value="1"/>
</dbReference>
<dbReference type="InterPro" id="IPR042096">
    <property type="entry name" value="Dihydro-acid_dehy_C"/>
</dbReference>
<dbReference type="InterPro" id="IPR004404">
    <property type="entry name" value="DihydroxyA_deHydtase"/>
</dbReference>
<dbReference type="InterPro" id="IPR020558">
    <property type="entry name" value="DiOHA_6PGluconate_deHydtase_CS"/>
</dbReference>
<dbReference type="InterPro" id="IPR056740">
    <property type="entry name" value="ILV_EDD_C"/>
</dbReference>
<dbReference type="InterPro" id="IPR000581">
    <property type="entry name" value="ILV_EDD_N"/>
</dbReference>
<dbReference type="InterPro" id="IPR037237">
    <property type="entry name" value="IlvD/EDD_N"/>
</dbReference>
<dbReference type="NCBIfam" id="TIGR00110">
    <property type="entry name" value="ilvD"/>
    <property type="match status" value="1"/>
</dbReference>
<dbReference type="NCBIfam" id="NF002068">
    <property type="entry name" value="PRK00911.1"/>
    <property type="match status" value="1"/>
</dbReference>
<dbReference type="PANTHER" id="PTHR43661">
    <property type="entry name" value="D-XYLONATE DEHYDRATASE"/>
    <property type="match status" value="1"/>
</dbReference>
<dbReference type="PANTHER" id="PTHR43661:SF3">
    <property type="entry name" value="D-XYLONATE DEHYDRATASE YAGF-RELATED"/>
    <property type="match status" value="1"/>
</dbReference>
<dbReference type="Pfam" id="PF24877">
    <property type="entry name" value="ILV_EDD_C"/>
    <property type="match status" value="1"/>
</dbReference>
<dbReference type="Pfam" id="PF00920">
    <property type="entry name" value="ILVD_EDD_N"/>
    <property type="match status" value="1"/>
</dbReference>
<dbReference type="SUPFAM" id="SSF143975">
    <property type="entry name" value="IlvD/EDD N-terminal domain-like"/>
    <property type="match status" value="1"/>
</dbReference>
<dbReference type="SUPFAM" id="SSF52016">
    <property type="entry name" value="LeuD/IlvD-like"/>
    <property type="match status" value="1"/>
</dbReference>
<dbReference type="PROSITE" id="PS00886">
    <property type="entry name" value="ILVD_EDD_1"/>
    <property type="match status" value="1"/>
</dbReference>
<dbReference type="PROSITE" id="PS00887">
    <property type="entry name" value="ILVD_EDD_2"/>
    <property type="match status" value="1"/>
</dbReference>